<feature type="chain" id="PRO_0000165119" description="Uncharacterized 39.7 kDa protein in nrdC-mobD intergenic region">
    <location>
        <begin position="1"/>
        <end position="340"/>
    </location>
</feature>
<sequence>MKTRSQIEDMVRNASYTRDVMTFLCENNLDPDKVNRVIHHFKYTNSSEWVRNFSKAGYITQMTAREQLTDFCKTIDYKNPLFVQGVGQSKVDLSSGFFNPNHYRIEWRFIALFRRQLKQILSTASRLKGSDINLKNLKFDGYTLQMEVRPLKENNRTARISFKPNTKNSLSICECLKSQLTEAFKYMDVVAAVQSKILPRFERFKLDTTSYELDMIVSFKYEFLRKDEVTQEKKQEVQDNLNLSNYLSNDPKFWMYSSGNKDAWKFNKVNFLPVENPSLKPVEKWHADAIEKSLKAVDAELVKATNEVLEAEKALEQAQSRVQNLTKQRSKLNNALNALN</sequence>
<organism>
    <name type="scientific">Enterobacteria phage T4</name>
    <name type="common">Bacteriophage T4</name>
    <dbReference type="NCBI Taxonomy" id="10665"/>
    <lineage>
        <taxon>Viruses</taxon>
        <taxon>Duplodnaviria</taxon>
        <taxon>Heunggongvirae</taxon>
        <taxon>Uroviricota</taxon>
        <taxon>Caudoviricetes</taxon>
        <taxon>Straboviridae</taxon>
        <taxon>Tevenvirinae</taxon>
        <taxon>Tequatrovirus</taxon>
    </lineage>
</organism>
<dbReference type="EMBL" id="U76612">
    <property type="protein sequence ID" value="AAB26977.1"/>
    <property type="molecule type" value="Genomic_DNA"/>
</dbReference>
<dbReference type="EMBL" id="AF158101">
    <property type="protein sequence ID" value="AAD42636.1"/>
    <property type="molecule type" value="Genomic_DNA"/>
</dbReference>
<dbReference type="RefSeq" id="NP_049703.1">
    <property type="nucleotide sequence ID" value="NC_000866.4"/>
</dbReference>
<dbReference type="SMR" id="P39256"/>
<dbReference type="GeneID" id="1258750"/>
<dbReference type="KEGG" id="vg:1258750"/>
<dbReference type="OrthoDB" id="4527at10239"/>
<dbReference type="Proteomes" id="UP000009087">
    <property type="component" value="Segment"/>
</dbReference>
<dbReference type="InterPro" id="IPR055659">
    <property type="entry name" value="DUF7235"/>
</dbReference>
<dbReference type="Pfam" id="PF23882">
    <property type="entry name" value="DUF7235"/>
    <property type="match status" value="1"/>
</dbReference>
<protein>
    <recommendedName>
        <fullName>Uncharacterized 39.7 kDa protein in nrdC-mobD intergenic region</fullName>
    </recommendedName>
</protein>
<accession>P39256</accession>
<name>Y05A_BPT4</name>
<organismHost>
    <name type="scientific">Escherichia coli</name>
    <dbReference type="NCBI Taxonomy" id="562"/>
</organismHost>
<keyword id="KW-1185">Reference proteome</keyword>
<gene>
    <name type="primary">y05A</name>
    <name type="synonym">nrdC.5</name>
</gene>
<reference key="1">
    <citation type="submission" date="1996-11" db="EMBL/GenBank/DDBJ databases">
        <title>The 10.7 kb 'nonessential' region of bacteriophage T4 between the genes tk and nrdC: twenty new t4 genes, generally conserved among T-even phages.</title>
        <authorList>
            <person name="Mzhavia N."/>
            <person name="Marusich E."/>
            <person name="Djavakhishvili T."/>
            <person name="Neitzel J."/>
            <person name="Peterson S."/>
            <person name="Awaya M."/>
            <person name="Eidermiller J."/>
            <person name="Canada D."/>
            <person name="Tracy J."/>
            <person name="Gailbreath K."/>
            <person name="Paddison P."/>
            <person name="Anderson B."/>
            <person name="Stidham T."/>
            <person name="Blattner F."/>
            <person name="Kutter E.M."/>
        </authorList>
    </citation>
    <scope>NUCLEOTIDE SEQUENCE [GENOMIC DNA]</scope>
</reference>
<reference key="2">
    <citation type="journal article" date="2003" name="Microbiol. Mol. Biol. Rev.">
        <title>Bacteriophage T4 genome.</title>
        <authorList>
            <person name="Miller E.S."/>
            <person name="Kutter E."/>
            <person name="Mosig G."/>
            <person name="Arisaka F."/>
            <person name="Kunisawa T."/>
            <person name="Ruger W."/>
        </authorList>
    </citation>
    <scope>NUCLEOTIDE SEQUENCE [LARGE SCALE GENOMIC DNA]</scope>
</reference>
<proteinExistence type="predicted"/>